<proteinExistence type="inferred from homology"/>
<gene>
    <name type="primary">ANG</name>
    <name type="synonym">RNASE5</name>
</gene>
<reference key="1">
    <citation type="journal article" date="2002" name="Mol. Biol. Evol.">
        <title>Diversifying selection of the tumor-growth promoter angiogenin in primate evolution.</title>
        <authorList>
            <person name="Zhang J."/>
            <person name="Rosenberg H.F."/>
        </authorList>
    </citation>
    <scope>NUCLEOTIDE SEQUENCE [GENOMIC DNA]</scope>
</reference>
<keyword id="KW-0037">Angiogenesis</keyword>
<keyword id="KW-0963">Cytoplasm</keyword>
<keyword id="KW-0217">Developmental protein</keyword>
<keyword id="KW-0221">Differentiation</keyword>
<keyword id="KW-1015">Disulfide bond</keyword>
<keyword id="KW-0238">DNA-binding</keyword>
<keyword id="KW-0255">Endonuclease</keyword>
<keyword id="KW-0378">Hydrolase</keyword>
<keyword id="KW-0540">Nuclease</keyword>
<keyword id="KW-0539">Nucleus</keyword>
<keyword id="KW-0652">Protein synthesis inhibitor</keyword>
<keyword id="KW-0873">Pyrrolidone carboxylic acid</keyword>
<keyword id="KW-0964">Secreted</keyword>
<keyword id="KW-0732">Signal</keyword>
<keyword id="KW-0346">Stress response</keyword>
<name>ANGI_CHLAE</name>
<dbReference type="EC" id="3.1.27.-" evidence="1"/>
<dbReference type="EMBL" id="AF441664">
    <property type="protein sequence ID" value="AAL61646.1"/>
    <property type="molecule type" value="Genomic_DNA"/>
</dbReference>
<dbReference type="SMR" id="Q8WN66"/>
<dbReference type="GO" id="GO:0032311">
    <property type="term" value="C:angiogenin-PRI complex"/>
    <property type="evidence" value="ECO:0000250"/>
    <property type="project" value="UniProtKB"/>
</dbReference>
<dbReference type="GO" id="GO:0005604">
    <property type="term" value="C:basement membrane"/>
    <property type="evidence" value="ECO:0000250"/>
    <property type="project" value="UniProtKB"/>
</dbReference>
<dbReference type="GO" id="GO:0005737">
    <property type="term" value="C:cytoplasm"/>
    <property type="evidence" value="ECO:0000250"/>
    <property type="project" value="UniProtKB"/>
</dbReference>
<dbReference type="GO" id="GO:0010494">
    <property type="term" value="C:cytoplasmic stress granule"/>
    <property type="evidence" value="ECO:0007669"/>
    <property type="project" value="UniProtKB-SubCell"/>
</dbReference>
<dbReference type="GO" id="GO:0030139">
    <property type="term" value="C:endocytic vesicle"/>
    <property type="evidence" value="ECO:0000250"/>
    <property type="project" value="UniProtKB"/>
</dbReference>
<dbReference type="GO" id="GO:0005615">
    <property type="term" value="C:extracellular space"/>
    <property type="evidence" value="ECO:0000250"/>
    <property type="project" value="UniProtKB"/>
</dbReference>
<dbReference type="GO" id="GO:0005730">
    <property type="term" value="C:nucleolus"/>
    <property type="evidence" value="ECO:0000250"/>
    <property type="project" value="UniProtKB"/>
</dbReference>
<dbReference type="GO" id="GO:0005634">
    <property type="term" value="C:nucleus"/>
    <property type="evidence" value="ECO:0000250"/>
    <property type="project" value="UniProtKB"/>
</dbReference>
<dbReference type="GO" id="GO:0003779">
    <property type="term" value="F:actin binding"/>
    <property type="evidence" value="ECO:0000250"/>
    <property type="project" value="UniProtKB"/>
</dbReference>
<dbReference type="GO" id="GO:0005507">
    <property type="term" value="F:copper ion binding"/>
    <property type="evidence" value="ECO:0000250"/>
    <property type="project" value="UniProtKB"/>
</dbReference>
<dbReference type="GO" id="GO:0003677">
    <property type="term" value="F:DNA binding"/>
    <property type="evidence" value="ECO:0007669"/>
    <property type="project" value="UniProtKB-KW"/>
</dbReference>
<dbReference type="GO" id="GO:0004519">
    <property type="term" value="F:endonuclease activity"/>
    <property type="evidence" value="ECO:0007669"/>
    <property type="project" value="UniProtKB-KW"/>
</dbReference>
<dbReference type="GO" id="GO:0008201">
    <property type="term" value="F:heparin binding"/>
    <property type="evidence" value="ECO:0000250"/>
    <property type="project" value="UniProtKB"/>
</dbReference>
<dbReference type="GO" id="GO:0042803">
    <property type="term" value="F:protein homodimerization activity"/>
    <property type="evidence" value="ECO:0000250"/>
    <property type="project" value="UniProtKB"/>
</dbReference>
<dbReference type="GO" id="GO:0004540">
    <property type="term" value="F:RNA nuclease activity"/>
    <property type="evidence" value="ECO:0000250"/>
    <property type="project" value="UniProtKB"/>
</dbReference>
<dbReference type="GO" id="GO:0005102">
    <property type="term" value="F:signaling receptor binding"/>
    <property type="evidence" value="ECO:0000250"/>
    <property type="project" value="UniProtKB"/>
</dbReference>
<dbReference type="GO" id="GO:0004549">
    <property type="term" value="F:tRNA-specific ribonuclease activity"/>
    <property type="evidence" value="ECO:0000250"/>
    <property type="project" value="UniProtKB"/>
</dbReference>
<dbReference type="GO" id="GO:0030041">
    <property type="term" value="P:actin filament polymerization"/>
    <property type="evidence" value="ECO:0000250"/>
    <property type="project" value="UniProtKB"/>
</dbReference>
<dbReference type="GO" id="GO:0001525">
    <property type="term" value="P:angiogenesis"/>
    <property type="evidence" value="ECO:0000250"/>
    <property type="project" value="UniProtKB"/>
</dbReference>
<dbReference type="GO" id="GO:0019731">
    <property type="term" value="P:antibacterial humoral response"/>
    <property type="evidence" value="ECO:0007669"/>
    <property type="project" value="TreeGrafter"/>
</dbReference>
<dbReference type="GO" id="GO:0061844">
    <property type="term" value="P:antimicrobial humoral immune response mediated by antimicrobial peptide"/>
    <property type="evidence" value="ECO:0007669"/>
    <property type="project" value="TreeGrafter"/>
</dbReference>
<dbReference type="GO" id="GO:0050830">
    <property type="term" value="P:defense response to Gram-positive bacterium"/>
    <property type="evidence" value="ECO:0007669"/>
    <property type="project" value="TreeGrafter"/>
</dbReference>
<dbReference type="GO" id="GO:0071425">
    <property type="term" value="P:hematopoietic stem cell proliferation"/>
    <property type="evidence" value="ECO:0000250"/>
    <property type="project" value="UniProtKB"/>
</dbReference>
<dbReference type="GO" id="GO:0045087">
    <property type="term" value="P:innate immune response"/>
    <property type="evidence" value="ECO:0007669"/>
    <property type="project" value="TreeGrafter"/>
</dbReference>
<dbReference type="GO" id="GO:0043066">
    <property type="term" value="P:negative regulation of apoptotic process"/>
    <property type="evidence" value="ECO:0000250"/>
    <property type="project" value="UniProtKB"/>
</dbReference>
<dbReference type="GO" id="GO:0048662">
    <property type="term" value="P:negative regulation of smooth muscle cell proliferation"/>
    <property type="evidence" value="ECO:0000250"/>
    <property type="project" value="UniProtKB"/>
</dbReference>
<dbReference type="GO" id="GO:0032055">
    <property type="term" value="P:negative regulation of translation in response to stress"/>
    <property type="evidence" value="ECO:0000250"/>
    <property type="project" value="UniProtKB"/>
</dbReference>
<dbReference type="GO" id="GO:0001938">
    <property type="term" value="P:positive regulation of endothelial cell proliferation"/>
    <property type="evidence" value="ECO:0000250"/>
    <property type="project" value="UniProtKB"/>
</dbReference>
<dbReference type="GO" id="GO:0050714">
    <property type="term" value="P:positive regulation of protein secretion"/>
    <property type="evidence" value="ECO:0000250"/>
    <property type="project" value="UniProtKB"/>
</dbReference>
<dbReference type="GO" id="GO:0001666">
    <property type="term" value="P:response to hypoxia"/>
    <property type="evidence" value="ECO:0000250"/>
    <property type="project" value="UniProtKB"/>
</dbReference>
<dbReference type="GO" id="GO:0009303">
    <property type="term" value="P:rRNA transcription"/>
    <property type="evidence" value="ECO:0000250"/>
    <property type="project" value="UniProtKB"/>
</dbReference>
<dbReference type="GO" id="GO:0023052">
    <property type="term" value="P:signaling"/>
    <property type="evidence" value="ECO:0000250"/>
    <property type="project" value="UniProtKB"/>
</dbReference>
<dbReference type="GO" id="GO:0034063">
    <property type="term" value="P:stress granule assembly"/>
    <property type="evidence" value="ECO:0000250"/>
    <property type="project" value="UniProtKB"/>
</dbReference>
<dbReference type="CDD" id="cd06265">
    <property type="entry name" value="RNase_A_canonical"/>
    <property type="match status" value="1"/>
</dbReference>
<dbReference type="FunFam" id="3.10.130.10:FF:000001">
    <property type="entry name" value="Ribonuclease pancreatic"/>
    <property type="match status" value="1"/>
</dbReference>
<dbReference type="Gene3D" id="3.10.130.10">
    <property type="entry name" value="Ribonuclease A-like domain"/>
    <property type="match status" value="1"/>
</dbReference>
<dbReference type="InterPro" id="IPR001427">
    <property type="entry name" value="RNaseA"/>
</dbReference>
<dbReference type="InterPro" id="IPR036816">
    <property type="entry name" value="RNaseA-like_dom_sf"/>
</dbReference>
<dbReference type="InterPro" id="IPR023411">
    <property type="entry name" value="RNaseA_AS"/>
</dbReference>
<dbReference type="InterPro" id="IPR023412">
    <property type="entry name" value="RNaseA_domain"/>
</dbReference>
<dbReference type="PANTHER" id="PTHR11437:SF60">
    <property type="entry name" value="ANGIOGENIN"/>
    <property type="match status" value="1"/>
</dbReference>
<dbReference type="PANTHER" id="PTHR11437">
    <property type="entry name" value="RIBONUCLEASE"/>
    <property type="match status" value="1"/>
</dbReference>
<dbReference type="Pfam" id="PF00074">
    <property type="entry name" value="RnaseA"/>
    <property type="match status" value="1"/>
</dbReference>
<dbReference type="PRINTS" id="PR00794">
    <property type="entry name" value="RIBONUCLEASE"/>
</dbReference>
<dbReference type="SMART" id="SM00092">
    <property type="entry name" value="RNAse_Pc"/>
    <property type="match status" value="1"/>
</dbReference>
<dbReference type="SUPFAM" id="SSF54076">
    <property type="entry name" value="RNase A-like"/>
    <property type="match status" value="1"/>
</dbReference>
<dbReference type="PROSITE" id="PS00127">
    <property type="entry name" value="RNASE_PANCREATIC"/>
    <property type="match status" value="1"/>
</dbReference>
<comment type="function">
    <text evidence="1 2">Secreted ribonuclease that can either promote or restrict cell proliferation of target cells, depending on the context. Endocytosed in target cells via its receptor PLXNB2 and translocates to the cytoplasm or nucleus. Under stress conditions, localizes to the cytoplasm and promotes the assembly of stress granules (SGs): specifically cleaves a subset of tRNAs within anticodon loops to produce tRNA-derived stress-induced fragments (tiRNAs), resulting in translation repression and inhibition of cell proliferation (By similarity). tiRNas also prevent formation of apoptosome, thereby promoting cell survival (By similarity). Preferentially cleaves RNAs between a pyrimidine and an adenosine residue, suggesting that it cleaves the anticodon loop of tRNA(Ala) (32-UUAGCAU-38) after positions 33 and 36. Cleaves a subset of tRNAs, including tRNA(Ala), tRNA(Glu), tRNA(Gly), tRNA(Lys), tRNA(Val), tRNA(His), tRNA(Asp) and tRNA(Sec). Under growth conditions and in differentiated cells, translocates to the nucleus and stimulates ribosomal RNA (rRNA) transcription, including that containing the initiation site sequences of 45S rRNA, thereby promoting cell growth and proliferation. Angiogenin induces vascularization of normal and malignant tissues via its ability to promote rRNA transcription. Involved in hematopoietic stem and progenitor cell (HSPC) growth and survival by promoting rRNA transcription in growth conditions and inhibiting translation in response to stress, respectively. Mediates the crosstalk between myeloid and intestinal epithelial cells to protect the intestinal epithelial barrier integrity: secreted by myeloid cells and promotes intestinal epithelial cells proliferation and survival (By similarity). Also mediates osteoclast-endothelial cell crosstalk in growing bone: produced by osteoclasts and protects the neighboring vascular cells against senescence by promoting rRNA transcription (By similarity).</text>
</comment>
<comment type="activity regulation">
    <text evidence="1">Has weak tRNA ribonuclease activity by itself due to partial autoinhibition by its C-terminus, which folds into a short alpha-helix that partially occludes the substrate-binding site. In absence of stress, the ribonuclease activity is inhibited by RNH1 in the cytoplasm. In response to stress, dissociates from RNH1 in the cytoplasm and associates with cytoplasmic ribosomes with vacant A-sites: ribosomes directly activate the tRNA ribonuclease activity of ANG by refolding the C-terminal alpha-helix. In response to stress, the angiogenic activity of ANG is inhibited by RNH1 in the nucleus.</text>
</comment>
<comment type="subunit">
    <text evidence="1">Homodimer. Interacts with RNH1; inhibiting ANG ribonuclease activity. Interacts with PCNA.</text>
</comment>
<comment type="subcellular location">
    <subcellularLocation>
        <location evidence="1">Secreted</location>
    </subcellularLocation>
    <subcellularLocation>
        <location evidence="1">Nucleus</location>
    </subcellularLocation>
    <subcellularLocation>
        <location evidence="1">Nucleus</location>
        <location evidence="1">Nucleolus</location>
    </subcellularLocation>
    <subcellularLocation>
        <location evidence="1">Cytoplasm</location>
        <location evidence="1">Stress granule</location>
    </subcellularLocation>
    <text evidence="1">The secreted protein is rapidly endocytosed by target cells following interaction with PLXNB2 receptor and translocated to the cytoplasm and nucleus. In the nucleus, accumulates in the nucleolus and binds to DNA.</text>
</comment>
<comment type="similarity">
    <text evidence="3">Belongs to the pancreatic ribonuclease family.</text>
</comment>
<sequence>MVMGLGLFLLVFMLGLGLTPPTLAQDNSRYRDFLAKHYDATPQGRNDRYCESTMRRRHLTSPCKDINTFIHGNRHHIKAICGDENGNPYGENLRISKSPFQVTTCNLRGGSPRPPCQYRATRGSRNIVVGCENGLPVHLDESIFRP</sequence>
<protein>
    <recommendedName>
        <fullName>Angiogenin</fullName>
        <ecNumber evidence="1">3.1.27.-</ecNumber>
    </recommendedName>
    <alternativeName>
        <fullName>Ribonuclease 5</fullName>
        <shortName>RNase 5</shortName>
    </alternativeName>
</protein>
<accession>Q8WN66</accession>
<feature type="signal peptide" evidence="1">
    <location>
        <begin position="1"/>
        <end position="24"/>
    </location>
</feature>
<feature type="chain" id="PRO_0000030840" description="Angiogenin">
    <location>
        <begin position="25"/>
        <end position="146"/>
    </location>
</feature>
<feature type="short sequence motif" description="Nucleolar localization signal" evidence="1">
    <location>
        <begin position="55"/>
        <end position="59"/>
    </location>
</feature>
<feature type="active site" description="Proton acceptor" evidence="1">
    <location>
        <position position="37"/>
    </location>
</feature>
<feature type="active site" description="Proton donor" evidence="1">
    <location>
        <position position="138"/>
    </location>
</feature>
<feature type="binding site" evidence="1">
    <location>
        <position position="45"/>
    </location>
    <ligand>
        <name>tRNA</name>
        <dbReference type="ChEBI" id="CHEBI:17843"/>
    </ligand>
</feature>
<feature type="binding site" evidence="1">
    <location>
        <position position="105"/>
    </location>
    <ligand>
        <name>tRNA</name>
        <dbReference type="ChEBI" id="CHEBI:17843"/>
    </ligand>
</feature>
<feature type="binding site" evidence="1">
    <location>
        <position position="127"/>
    </location>
    <ligand>
        <name>tRNA</name>
        <dbReference type="ChEBI" id="CHEBI:17843"/>
    </ligand>
</feature>
<feature type="modified residue" description="Pyrrolidone carboxylic acid" evidence="1">
    <location>
        <position position="25"/>
    </location>
</feature>
<feature type="disulfide bond" evidence="1">
    <location>
        <begin position="50"/>
        <end position="105"/>
    </location>
</feature>
<feature type="disulfide bond" evidence="1">
    <location>
        <begin position="63"/>
        <end position="116"/>
    </location>
</feature>
<feature type="disulfide bond" evidence="1">
    <location>
        <begin position="81"/>
        <end position="131"/>
    </location>
</feature>
<evidence type="ECO:0000250" key="1">
    <source>
        <dbReference type="UniProtKB" id="P03950"/>
    </source>
</evidence>
<evidence type="ECO:0000250" key="2">
    <source>
        <dbReference type="UniProtKB" id="P21570"/>
    </source>
</evidence>
<evidence type="ECO:0000305" key="3"/>
<organism>
    <name type="scientific">Chlorocebus aethiops</name>
    <name type="common">Green monkey</name>
    <name type="synonym">Cercopithecus aethiops</name>
    <dbReference type="NCBI Taxonomy" id="9534"/>
    <lineage>
        <taxon>Eukaryota</taxon>
        <taxon>Metazoa</taxon>
        <taxon>Chordata</taxon>
        <taxon>Craniata</taxon>
        <taxon>Vertebrata</taxon>
        <taxon>Euteleostomi</taxon>
        <taxon>Mammalia</taxon>
        <taxon>Eutheria</taxon>
        <taxon>Euarchontoglires</taxon>
        <taxon>Primates</taxon>
        <taxon>Haplorrhini</taxon>
        <taxon>Catarrhini</taxon>
        <taxon>Cercopithecidae</taxon>
        <taxon>Cercopithecinae</taxon>
        <taxon>Chlorocebus</taxon>
    </lineage>
</organism>